<feature type="signal peptide" evidence="1">
    <location>
        <begin position="1"/>
        <end position="27"/>
    </location>
</feature>
<feature type="chain" id="PRO_5004245961" description="Pathogenesis-related thaumatin-like protein 3.7">
    <location>
        <begin position="28"/>
        <end position="231"/>
    </location>
</feature>
<feature type="disulfide bond" evidence="2">
    <location>
        <begin position="36"/>
        <end position="230"/>
    </location>
</feature>
<feature type="disulfide bond" evidence="2">
    <location>
        <begin position="77"/>
        <end position="87"/>
    </location>
</feature>
<feature type="disulfide bond" evidence="2">
    <location>
        <begin position="92"/>
        <end position="98"/>
    </location>
</feature>
<feature type="disulfide bond" evidence="2">
    <location>
        <begin position="143"/>
        <end position="218"/>
    </location>
</feature>
<feature type="disulfide bond" evidence="2">
    <location>
        <begin position="148"/>
        <end position="201"/>
    </location>
</feature>
<feature type="disulfide bond" evidence="2">
    <location>
        <begin position="156"/>
        <end position="166"/>
    </location>
</feature>
<feature type="disulfide bond" evidence="2">
    <location>
        <begin position="170"/>
        <end position="179"/>
    </location>
</feature>
<feature type="disulfide bond" evidence="2">
    <location>
        <begin position="180"/>
        <end position="188"/>
    </location>
</feature>
<reference key="1">
    <citation type="journal article" date="2006" name="Tree Physiol.">
        <title>Characterization of genes for novel thaumatin-like proteins in Cryptomeria japonica.</title>
        <authorList>
            <person name="Futamura N."/>
            <person name="Tani N."/>
            <person name="Tsumura Y."/>
            <person name="Nakajima N."/>
            <person name="Sakaguchi M."/>
            <person name="Shinohara K."/>
        </authorList>
    </citation>
    <scope>NUCLEOTIDE SEQUENCE [MRNA]</scope>
    <scope>GENE FAMILY</scope>
    <scope>NOMENCLATURE</scope>
    <source>
        <tissue>Pollen</tissue>
    </source>
</reference>
<reference key="2">
    <citation type="journal article" date="2007" name="Allergy">
        <title>Isolation and characterization of native Cry j 3 from Japanese cedar (Cryptomeria japonica) pollen.</title>
        <authorList>
            <person name="Fujimura T."/>
            <person name="Futamura N."/>
            <person name="Midoro-Horiuti T."/>
            <person name="Togawa A."/>
            <person name="Goldblum R.M."/>
            <person name="Yasueda H."/>
            <person name="Saito A."/>
            <person name="Shinohara K."/>
            <person name="Masuda K."/>
            <person name="Kurata K."/>
            <person name="Sakaguchi M."/>
        </authorList>
    </citation>
    <scope>ALLERGEN</scope>
    <source>
        <tissue>Flower</tissue>
    </source>
</reference>
<reference key="3">
    <citation type="journal article" date="2010" name="Plant Cell Rep.">
        <title>The superfamily of thaumatin-like proteins: its origin, evolution, and expression towards biological function.</title>
        <authorList>
            <person name="Liu J.-J."/>
            <person name="Sturrock R."/>
            <person name="Ekramoddoullah A.K.M."/>
        </authorList>
    </citation>
    <scope>REVIEW ON THAUMATIN-LIKE PROTEINS</scope>
</reference>
<reference key="4">
    <citation type="journal article" date="2012" name="Vet. Immunol. Immunopathol.">
        <title>IgE reactivity to a Cry j 3, an allergen of Japanese cedar (Cryptomeria japonica) pollen in dogs with canine atopic dermatitis.</title>
        <authorList>
            <person name="Kubota S."/>
            <person name="Miyaji K."/>
            <person name="Shimo Y."/>
            <person name="Shimakura H."/>
            <person name="Takase Y."/>
            <person name="Okamoto N."/>
            <person name="Kiuchi A."/>
            <person name="Fujimura M."/>
            <person name="Fujimura T."/>
            <person name="DeBoer D.J."/>
            <person name="Tsukui T."/>
            <person name="Sakaguchi M."/>
        </authorList>
    </citation>
    <scope>ALLERGEN</scope>
    <source>
        <tissue>Pollen</tissue>
    </source>
</reference>
<reference key="5">
    <citation type="journal article" date="2015" name="Allergol. Int.">
        <title>Spectrum of allergens for Japanese cedar pollinosis and impact of component-resolved diagnosis on allergen-specific immunotherapy.</title>
        <authorList>
            <person name="Fujimura T."/>
            <person name="Kawamoto S."/>
        </authorList>
    </citation>
    <scope>REVIEW ON ALLERGEN</scope>
</reference>
<name>CRJ37_CRYJA</name>
<sequence length="231" mass="24326">MATVSDLALLLVAGLVAISLHMQEAGAVKFELKNQCEYTVWAAGLPGGGQQLDQGQTWPVEVPAGTKGARFWGRTGCSFDASGRGTCKTGDCNSQLSCQVSGGVPTTLAEYTLNGDGNKDFYDVSLVDGFNVPLSINPTNSQCFAPACKADVNAACPAQLKVDGGCNSACTVFQTDEYCCRGTHVDNCSPSSYSMIFKNQCPQAYSYAKDDSSSTFTCPSGTTDYSIVFCP</sequence>
<evidence type="ECO:0000255" key="1"/>
<evidence type="ECO:0000255" key="2">
    <source>
        <dbReference type="PROSITE-ProRule" id="PRU00699"/>
    </source>
</evidence>
<evidence type="ECO:0000269" key="3">
    <source>
    </source>
</evidence>
<evidence type="ECO:0000269" key="4">
    <source>
    </source>
</evidence>
<evidence type="ECO:0000303" key="5">
    <source>
    </source>
</evidence>
<evidence type="ECO:0000303" key="6">
    <source>
    </source>
</evidence>
<evidence type="ECO:0000303" key="7">
    <source>
    </source>
</evidence>
<evidence type="ECO:0000305" key="8"/>
<proteinExistence type="evidence at protein level"/>
<keyword id="KW-0020">Allergen</keyword>
<keyword id="KW-1015">Disulfide bond</keyword>
<keyword id="KW-0568">Pathogenesis-related protein</keyword>
<keyword id="KW-0611">Plant defense</keyword>
<keyword id="KW-0732">Signal</keyword>
<keyword id="KW-0346">Stress response</keyword>
<comment type="function">
    <text evidence="6">May be involved in disease resistance.</text>
</comment>
<comment type="allergen">
    <text evidence="3 4 7">Causes an oral allergy syndrome (OAS) reaction in human and animals (PubMed:17441795, PubMed:22749702, PubMed:26433527). Binds to IgE and induces the release of histamine from leukocytes of allergic patients (PubMed:17441795). Binds to IgE from canine atopic dermatitis (CAD) sensitive dogs (PubMed:22749702).</text>
</comment>
<comment type="similarity">
    <text evidence="2">Belongs to the thaumatin family.</text>
</comment>
<dbReference type="EMBL" id="AB212218">
    <property type="protein sequence ID" value="BAD99299.1"/>
    <property type="molecule type" value="mRNA"/>
</dbReference>
<dbReference type="SMR" id="Q4W6C7"/>
<dbReference type="Allergome" id="805">
    <property type="allergen name" value="Cry j 3"/>
</dbReference>
<dbReference type="GO" id="GO:0006952">
    <property type="term" value="P:defense response"/>
    <property type="evidence" value="ECO:0007669"/>
    <property type="project" value="UniProtKB-KW"/>
</dbReference>
<dbReference type="FunFam" id="2.60.110.10:FF:000003">
    <property type="entry name" value="Thaumatin I"/>
    <property type="match status" value="1"/>
</dbReference>
<dbReference type="Gene3D" id="2.60.110.10">
    <property type="entry name" value="Thaumatin"/>
    <property type="match status" value="1"/>
</dbReference>
<dbReference type="InterPro" id="IPR037176">
    <property type="entry name" value="Osmotin/thaumatin-like_sf"/>
</dbReference>
<dbReference type="InterPro" id="IPR001938">
    <property type="entry name" value="Thaumatin"/>
</dbReference>
<dbReference type="InterPro" id="IPR017949">
    <property type="entry name" value="Thaumatin_CS"/>
</dbReference>
<dbReference type="PANTHER" id="PTHR31048">
    <property type="entry name" value="OS03G0233200 PROTEIN"/>
    <property type="match status" value="1"/>
</dbReference>
<dbReference type="Pfam" id="PF00314">
    <property type="entry name" value="Thaumatin"/>
    <property type="match status" value="1"/>
</dbReference>
<dbReference type="PIRSF" id="PIRSF002703">
    <property type="entry name" value="Thaumatin"/>
    <property type="match status" value="1"/>
</dbReference>
<dbReference type="PRINTS" id="PR00347">
    <property type="entry name" value="THAUMATIN"/>
</dbReference>
<dbReference type="SMART" id="SM00205">
    <property type="entry name" value="THN"/>
    <property type="match status" value="1"/>
</dbReference>
<dbReference type="SUPFAM" id="SSF49870">
    <property type="entry name" value="Osmotin, thaumatin-like protein"/>
    <property type="match status" value="1"/>
</dbReference>
<dbReference type="PROSITE" id="PS00316">
    <property type="entry name" value="THAUMATIN_1"/>
    <property type="match status" value="1"/>
</dbReference>
<dbReference type="PROSITE" id="PS51367">
    <property type="entry name" value="THAUMATIN_2"/>
    <property type="match status" value="1"/>
</dbReference>
<organism>
    <name type="scientific">Cryptomeria japonica</name>
    <name type="common">Japanese cedar</name>
    <name type="synonym">Cupressus japonica</name>
    <dbReference type="NCBI Taxonomy" id="3369"/>
    <lineage>
        <taxon>Eukaryota</taxon>
        <taxon>Viridiplantae</taxon>
        <taxon>Streptophyta</taxon>
        <taxon>Embryophyta</taxon>
        <taxon>Tracheophyta</taxon>
        <taxon>Spermatophyta</taxon>
        <taxon>Pinopsida</taxon>
        <taxon>Pinidae</taxon>
        <taxon>Conifers II</taxon>
        <taxon>Cupressales</taxon>
        <taxon>Cupressaceae</taxon>
        <taxon>Cryptomeria</taxon>
    </lineage>
</organism>
<accession>Q4W6C7</accession>
<protein>
    <recommendedName>
        <fullName evidence="8">Pathogenesis-related thaumatin-like protein 3.7</fullName>
    </recommendedName>
    <allergenName evidence="5">Cry j 3.7</allergenName>
</protein>